<dbReference type="EMBL" id="FO080254">
    <property type="protein sequence ID" value="CCD62380.1"/>
    <property type="molecule type" value="Genomic_DNA"/>
</dbReference>
<dbReference type="PIR" id="T34081">
    <property type="entry name" value="T34081"/>
</dbReference>
<dbReference type="RefSeq" id="NP_508635.2">
    <property type="nucleotide sequence ID" value="NM_076234.4"/>
</dbReference>
<dbReference type="SMR" id="Q11102"/>
<dbReference type="BioGRID" id="45596">
    <property type="interactions" value="1"/>
</dbReference>
<dbReference type="STRING" id="6239.C02F12.7.1"/>
<dbReference type="PaxDb" id="6239-C02F12.7"/>
<dbReference type="PeptideAtlas" id="Q11102"/>
<dbReference type="EnsemblMetazoa" id="C02F12.7.1">
    <property type="protein sequence ID" value="C02F12.7.1"/>
    <property type="gene ID" value="WBGene00015356"/>
</dbReference>
<dbReference type="GeneID" id="180658"/>
<dbReference type="KEGG" id="cel:CELE_C02F12.7"/>
<dbReference type="UCSC" id="C02F12.7">
    <property type="organism name" value="c. elegans"/>
</dbReference>
<dbReference type="AGR" id="WB:WBGene00015356"/>
<dbReference type="CTD" id="180658"/>
<dbReference type="WormBase" id="C02F12.7">
    <property type="protein sequence ID" value="CE46044"/>
    <property type="gene ID" value="WBGene00015356"/>
    <property type="gene designation" value="tag-278"/>
</dbReference>
<dbReference type="eggNOG" id="ENOG502R5KC">
    <property type="taxonomic scope" value="Eukaryota"/>
</dbReference>
<dbReference type="HOGENOM" id="CLU_008363_0_0_1"/>
<dbReference type="InParanoid" id="Q11102"/>
<dbReference type="OrthoDB" id="75801at2759"/>
<dbReference type="PhylomeDB" id="Q11102"/>
<dbReference type="PRO" id="PR:Q11102"/>
<dbReference type="Proteomes" id="UP000001940">
    <property type="component" value="Chromosome X"/>
</dbReference>
<dbReference type="Bgee" id="WBGene00015356">
    <property type="expression patterns" value="Expressed in embryo and 3 other cell types or tissues"/>
</dbReference>
<dbReference type="InterPro" id="IPR039478">
    <property type="entry name" value="FAM184A/B_N"/>
</dbReference>
<dbReference type="PANTHER" id="PTHR18870">
    <property type="entry name" value="PROTEIN TAG-278-RELATED"/>
    <property type="match status" value="1"/>
</dbReference>
<dbReference type="PANTHER" id="PTHR18870:SF9">
    <property type="entry name" value="PROTEIN TAG-278-RELATED"/>
    <property type="match status" value="1"/>
</dbReference>
<dbReference type="Pfam" id="PF15665">
    <property type="entry name" value="FAM184"/>
    <property type="match status" value="1"/>
</dbReference>
<gene>
    <name type="primary">tag-278</name>
    <name type="ORF">C02F12.7</name>
</gene>
<sequence length="1130" mass="131485">MSRSPRPHGTHEPAVGVTRPFVRQSHPEIAAWPAPPPAHQLGCLSGNVRTPVGGPAPPSPVLRRAPSGPISPSPISPVSQHSRASSRHDIDNTSLLSILKLSHVARESSRNTSRNNSPQPAGRETELKRKIQTLEETVAEYERQKYNVMGTFSEYRERVAERERKLEAEYSGKIIALSEEVLGAKKDFEARMKSFQALQDKFEREKEQALEKLRKEHQKEIQVLEQRFSDTQLLNLEQKYIIEIQRLEEERKSLRTEKERLGETFEMKLRRAQSLYETELTAAKMLYTKELEALRDHEEALKEELLARQDEFHDRLQELQLQSKRSREDLVSCKNDVTALEKKLHNKEKEVQTLTKELDQVKTETNDKIRRLTEVTSEFAEYRKKFQQQEEELRRKARLLTVVEAAKEKLESVISDLQVEVKALKNKVEFLEKERENLQSQSESQTQLQSSQVDALEAVLHSVTKEKETTKEHYEGLLLKERQQAESREHAMKKEFSCKLNELEEQYTSLKEELEESARLDKDELREASEIEIQALRTEKSILAAEIRVLTQKIEDEEQDDITEQLAKIVEDTSQLTRTLEEYRERITGKDAEILNLRKQLEKEISHTEDRNRLLHENTQKELEAHKETHTETVRVLEAEIDQFKSAFENEQEYGKEKSAKIRELEAQNKTLLSEMEKVKHVAENLEAFTSDKDNLLEELESKNKNIEHLKQEIAQLNEKISTKETEKDSELEKTIAQLEIDNSSKSDQIEKLHLRVNDMLDQMGTIKDELVKKNEEIKTISAKTAQLLESNTVESETKLASVTEEREKEIQSFQTQISEKDNEVLTKAERINELETCLKEREVELTGMRTKLDDMTQQLNEETTVVLFDNSIQEKIDEKEATINEMNERLKSRENEIAKLHEEMYMQKTQNEKRNEEQSKLFQELMFEKEQLEAEKAEQSHIEAEVEQVFQADKESKWKEQIEDLENALQRKNELIQQLQDRQTDESTSEPHTKKRMSITSHGVFQNFVSQMKDKREEASEKRTRKEAEKKAEKEKEKAEKAAKEAAKELAREKSPARAKSPSILTRLRDRSPAKSKSDNLESTPSSSSRNLLSPFDAEKRMERSSPSQQLFSRTKKDSSSEKRPAWKF</sequence>
<accession>Q11102</accession>
<organism>
    <name type="scientific">Caenorhabditis elegans</name>
    <dbReference type="NCBI Taxonomy" id="6239"/>
    <lineage>
        <taxon>Eukaryota</taxon>
        <taxon>Metazoa</taxon>
        <taxon>Ecdysozoa</taxon>
        <taxon>Nematoda</taxon>
        <taxon>Chromadorea</taxon>
        <taxon>Rhabditida</taxon>
        <taxon>Rhabditina</taxon>
        <taxon>Rhabditomorpha</taxon>
        <taxon>Rhabditoidea</taxon>
        <taxon>Rhabditidae</taxon>
        <taxon>Peloderinae</taxon>
        <taxon>Caenorhabditis</taxon>
    </lineage>
</organism>
<reference key="1">
    <citation type="journal article" date="1998" name="Science">
        <title>Genome sequence of the nematode C. elegans: a platform for investigating biology.</title>
        <authorList>
            <consortium name="The C. elegans sequencing consortium"/>
        </authorList>
    </citation>
    <scope>NUCLEOTIDE SEQUENCE [LARGE SCALE GENOMIC DNA]</scope>
    <source>
        <strain>Bristol N2</strain>
    </source>
</reference>
<protein>
    <recommendedName>
        <fullName>Putative protein tag-278</fullName>
    </recommendedName>
</protein>
<evidence type="ECO:0000255" key="1"/>
<evidence type="ECO:0000256" key="2">
    <source>
        <dbReference type="SAM" id="MobiDB-lite"/>
    </source>
</evidence>
<keyword id="KW-0175">Coiled coil</keyword>
<keyword id="KW-1185">Reference proteome</keyword>
<name>TG278_CAEEL</name>
<proteinExistence type="predicted"/>
<feature type="chain" id="PRO_0000065114" description="Putative protein tag-278">
    <location>
        <begin position="1"/>
        <end position="1130"/>
    </location>
</feature>
<feature type="region of interest" description="Disordered" evidence="2">
    <location>
        <begin position="1"/>
        <end position="92"/>
    </location>
</feature>
<feature type="region of interest" description="Disordered" evidence="2">
    <location>
        <begin position="104"/>
        <end position="129"/>
    </location>
</feature>
<feature type="region of interest" description="Disordered" evidence="2">
    <location>
        <begin position="974"/>
        <end position="1130"/>
    </location>
</feature>
<feature type="coiled-coil region" evidence="1">
    <location>
        <begin position="121"/>
        <end position="779"/>
    </location>
</feature>
<feature type="coiled-coil region" evidence="1">
    <location>
        <begin position="805"/>
        <end position="1061"/>
    </location>
</feature>
<feature type="compositionally biased region" description="Basic and acidic residues" evidence="2">
    <location>
        <begin position="983"/>
        <end position="993"/>
    </location>
</feature>
<feature type="compositionally biased region" description="Polar residues" evidence="2">
    <location>
        <begin position="999"/>
        <end position="1011"/>
    </location>
</feature>
<feature type="compositionally biased region" description="Basic and acidic residues" evidence="2">
    <location>
        <begin position="1013"/>
        <end position="1057"/>
    </location>
</feature>
<feature type="compositionally biased region" description="Basic and acidic residues" evidence="2">
    <location>
        <begin position="1068"/>
        <end position="1081"/>
    </location>
</feature>
<feature type="compositionally biased region" description="Low complexity" evidence="2">
    <location>
        <begin position="1082"/>
        <end position="1095"/>
    </location>
</feature>
<feature type="compositionally biased region" description="Basic and acidic residues" evidence="2">
    <location>
        <begin position="1116"/>
        <end position="1130"/>
    </location>
</feature>